<reference key="1">
    <citation type="journal article" date="2002" name="Nucleic Acids Res.">
        <title>Genome sequence of Shigella flexneri 2a: insights into pathogenicity through comparison with genomes of Escherichia coli K12 and O157.</title>
        <authorList>
            <person name="Jin Q."/>
            <person name="Yuan Z."/>
            <person name="Xu J."/>
            <person name="Wang Y."/>
            <person name="Shen Y."/>
            <person name="Lu W."/>
            <person name="Wang J."/>
            <person name="Liu H."/>
            <person name="Yang J."/>
            <person name="Yang F."/>
            <person name="Zhang X."/>
            <person name="Zhang J."/>
            <person name="Yang G."/>
            <person name="Wu H."/>
            <person name="Qu D."/>
            <person name="Dong J."/>
            <person name="Sun L."/>
            <person name="Xue Y."/>
            <person name="Zhao A."/>
            <person name="Gao Y."/>
            <person name="Zhu J."/>
            <person name="Kan B."/>
            <person name="Ding K."/>
            <person name="Chen S."/>
            <person name="Cheng H."/>
            <person name="Yao Z."/>
            <person name="He B."/>
            <person name="Chen R."/>
            <person name="Ma D."/>
            <person name="Qiang B."/>
            <person name="Wen Y."/>
            <person name="Hou Y."/>
            <person name="Yu J."/>
        </authorList>
    </citation>
    <scope>NUCLEOTIDE SEQUENCE [LARGE SCALE GENOMIC DNA]</scope>
    <source>
        <strain>301 / Serotype 2a</strain>
    </source>
</reference>
<reference key="2">
    <citation type="journal article" date="2003" name="Infect. Immun.">
        <title>Complete genome sequence and comparative genomics of Shigella flexneri serotype 2a strain 2457T.</title>
        <authorList>
            <person name="Wei J."/>
            <person name="Goldberg M.B."/>
            <person name="Burland V."/>
            <person name="Venkatesan M.M."/>
            <person name="Deng W."/>
            <person name="Fournier G."/>
            <person name="Mayhew G.F."/>
            <person name="Plunkett G. III"/>
            <person name="Rose D.J."/>
            <person name="Darling A."/>
            <person name="Mau B."/>
            <person name="Perna N.T."/>
            <person name="Payne S.M."/>
            <person name="Runyen-Janecky L.J."/>
            <person name="Zhou S."/>
            <person name="Schwartz D.C."/>
            <person name="Blattner F.R."/>
        </authorList>
    </citation>
    <scope>NUCLEOTIDE SEQUENCE [LARGE SCALE GENOMIC DNA]</scope>
    <source>
        <strain>ATCC 700930 / 2457T / Serotype 2a</strain>
    </source>
</reference>
<protein>
    <recommendedName>
        <fullName evidence="2">NADP-dependent 3-hydroxy acid dehydrogenase YdfG</fullName>
    </recommendedName>
    <alternativeName>
        <fullName evidence="2">L-allo-threonine dehydrogenase</fullName>
        <ecNumber evidence="2">1.1.1.381</ecNumber>
    </alternativeName>
    <alternativeName>
        <fullName evidence="2">Malonic semialdehyde reductase</fullName>
        <ecNumber evidence="2">1.1.1.298</ecNumber>
    </alternativeName>
</protein>
<keyword id="KW-0521">NADP</keyword>
<keyword id="KW-0560">Oxidoreductase</keyword>
<keyword id="KW-1185">Reference proteome</keyword>
<organism>
    <name type="scientific">Shigella flexneri</name>
    <dbReference type="NCBI Taxonomy" id="623"/>
    <lineage>
        <taxon>Bacteria</taxon>
        <taxon>Pseudomonadati</taxon>
        <taxon>Pseudomonadota</taxon>
        <taxon>Gammaproteobacteria</taxon>
        <taxon>Enterobacterales</taxon>
        <taxon>Enterobacteriaceae</taxon>
        <taxon>Shigella</taxon>
    </lineage>
</organism>
<evidence type="ECO:0000250" key="1"/>
<evidence type="ECO:0000250" key="2">
    <source>
        <dbReference type="UniProtKB" id="P39831"/>
    </source>
</evidence>
<evidence type="ECO:0000250" key="3">
    <source>
        <dbReference type="UniProtKB" id="Q05016"/>
    </source>
</evidence>
<evidence type="ECO:0000255" key="4">
    <source>
        <dbReference type="PROSITE-ProRule" id="PRU10001"/>
    </source>
</evidence>
<evidence type="ECO:0000305" key="5"/>
<dbReference type="EC" id="1.1.1.381" evidence="2"/>
<dbReference type="EC" id="1.1.1.298" evidence="2"/>
<dbReference type="EMBL" id="AE005674">
    <property type="protein sequence ID" value="AAN43145.2"/>
    <property type="molecule type" value="Genomic_DNA"/>
</dbReference>
<dbReference type="EMBL" id="AE014073">
    <property type="protein sequence ID" value="AAP17037.1"/>
    <property type="molecule type" value="Genomic_DNA"/>
</dbReference>
<dbReference type="RefSeq" id="NP_707438.2">
    <property type="nucleotide sequence ID" value="NC_004337.2"/>
</dbReference>
<dbReference type="RefSeq" id="WP_011069376.1">
    <property type="nucleotide sequence ID" value="NZ_CP123365.1"/>
</dbReference>
<dbReference type="SMR" id="Q83RE8"/>
<dbReference type="STRING" id="198214.SF1556"/>
<dbReference type="PaxDb" id="198214-SF1556"/>
<dbReference type="GeneID" id="1024772"/>
<dbReference type="KEGG" id="sfl:SF1556"/>
<dbReference type="KEGG" id="sfx:S1681"/>
<dbReference type="PATRIC" id="fig|198214.7.peg.1838"/>
<dbReference type="HOGENOM" id="CLU_010194_2_10_6"/>
<dbReference type="Proteomes" id="UP000001006">
    <property type="component" value="Chromosome"/>
</dbReference>
<dbReference type="Proteomes" id="UP000002673">
    <property type="component" value="Chromosome"/>
</dbReference>
<dbReference type="GO" id="GO:0005829">
    <property type="term" value="C:cytosol"/>
    <property type="evidence" value="ECO:0007669"/>
    <property type="project" value="TreeGrafter"/>
</dbReference>
<dbReference type="GO" id="GO:0035527">
    <property type="term" value="F:3-hydroxypropionate dehydrogenase (NADP+) activity"/>
    <property type="evidence" value="ECO:0007669"/>
    <property type="project" value="UniProtKB-EC"/>
</dbReference>
<dbReference type="CDD" id="cd05346">
    <property type="entry name" value="SDR_c5"/>
    <property type="match status" value="1"/>
</dbReference>
<dbReference type="FunFam" id="3.40.50.720:FF:000047">
    <property type="entry name" value="NADP-dependent L-serine/L-allo-threonine dehydrogenase"/>
    <property type="match status" value="1"/>
</dbReference>
<dbReference type="Gene3D" id="3.40.50.720">
    <property type="entry name" value="NAD(P)-binding Rossmann-like Domain"/>
    <property type="match status" value="1"/>
</dbReference>
<dbReference type="InterPro" id="IPR036291">
    <property type="entry name" value="NAD(P)-bd_dom_sf"/>
</dbReference>
<dbReference type="InterPro" id="IPR020904">
    <property type="entry name" value="Sc_DH/Rdtase_CS"/>
</dbReference>
<dbReference type="InterPro" id="IPR002347">
    <property type="entry name" value="SDR_fam"/>
</dbReference>
<dbReference type="NCBIfam" id="NF007829">
    <property type="entry name" value="PRK10538.1"/>
    <property type="match status" value="1"/>
</dbReference>
<dbReference type="PANTHER" id="PTHR43086:SF3">
    <property type="entry name" value="NADP-DEPENDENT 3-HYDROXY ACID DEHYDROGENASE YDFG"/>
    <property type="match status" value="1"/>
</dbReference>
<dbReference type="PANTHER" id="PTHR43086">
    <property type="entry name" value="VERY-LONG-CHAIN 3-OXOOACYL-COA REDUCTASE"/>
    <property type="match status" value="1"/>
</dbReference>
<dbReference type="Pfam" id="PF00106">
    <property type="entry name" value="adh_short"/>
    <property type="match status" value="1"/>
</dbReference>
<dbReference type="PRINTS" id="PR00081">
    <property type="entry name" value="GDHRDH"/>
</dbReference>
<dbReference type="PRINTS" id="PR00080">
    <property type="entry name" value="SDRFAMILY"/>
</dbReference>
<dbReference type="SUPFAM" id="SSF51735">
    <property type="entry name" value="NAD(P)-binding Rossmann-fold domains"/>
    <property type="match status" value="1"/>
</dbReference>
<dbReference type="PROSITE" id="PS00061">
    <property type="entry name" value="ADH_SHORT"/>
    <property type="match status" value="1"/>
</dbReference>
<feature type="chain" id="PRO_0000054830" description="NADP-dependent 3-hydroxy acid dehydrogenase YdfG">
    <location>
        <begin position="1"/>
        <end position="248"/>
    </location>
</feature>
<feature type="active site" description="Proton acceptor" evidence="4">
    <location>
        <position position="147"/>
    </location>
</feature>
<feature type="binding site" evidence="3">
    <location>
        <begin position="7"/>
        <end position="12"/>
    </location>
    <ligand>
        <name>NADP(+)</name>
        <dbReference type="ChEBI" id="CHEBI:58349"/>
    </ligand>
</feature>
<feature type="binding site" evidence="3">
    <location>
        <begin position="32"/>
        <end position="33"/>
    </location>
    <ligand>
        <name>NADP(+)</name>
        <dbReference type="ChEBI" id="CHEBI:58349"/>
    </ligand>
</feature>
<feature type="binding site" evidence="3">
    <location>
        <begin position="54"/>
        <end position="55"/>
    </location>
    <ligand>
        <name>NADP(+)</name>
        <dbReference type="ChEBI" id="CHEBI:58349"/>
    </ligand>
</feature>
<feature type="binding site" evidence="3">
    <location>
        <position position="81"/>
    </location>
    <ligand>
        <name>NADP(+)</name>
        <dbReference type="ChEBI" id="CHEBI:58349"/>
    </ligand>
</feature>
<feature type="binding site" evidence="1">
    <location>
        <position position="134"/>
    </location>
    <ligand>
        <name>substrate</name>
    </ligand>
</feature>
<feature type="binding site" evidence="3">
    <location>
        <position position="147"/>
    </location>
    <ligand>
        <name>NADP(+)</name>
        <dbReference type="ChEBI" id="CHEBI:58349"/>
    </ligand>
</feature>
<feature type="binding site" evidence="3">
    <location>
        <position position="151"/>
    </location>
    <ligand>
        <name>NADP(+)</name>
        <dbReference type="ChEBI" id="CHEBI:58349"/>
    </ligand>
</feature>
<feature type="binding site" evidence="3">
    <location>
        <begin position="177"/>
        <end position="185"/>
    </location>
    <ligand>
        <name>NADP(+)</name>
        <dbReference type="ChEBI" id="CHEBI:58349"/>
    </ligand>
</feature>
<comment type="function">
    <text evidence="2">NADP-dependent dehydrogenase with broad substrate specificity acting on 3-hydroxy acids. Catalyzes the NADP-dependent oxidation of L-allo-threonine to L-2-amino-3-keto-butyrate, which is spontaneously decarboxylated into aminoacetone. Also acts on D-threonine, L-serine, D-serine, D-3-hydroxyisobutyrate, L-3-hydroxyisobutyrate, D-glycerate and L-glycerate. Able to catalyze the reduction of the malonic semialdehyde to 3-hydroxypropionic acid. YdfG is apparently supplementing RutE, the presumed malonic semialdehyde reductase involved in pyrimidine degradation since both are able to detoxify malonic semialdehyde.</text>
</comment>
<comment type="catalytic activity">
    <reaction evidence="2">
        <text>3-hydroxypropanoate + NADP(+) = 3-oxopropanoate + NADPH + H(+)</text>
        <dbReference type="Rhea" id="RHEA:26438"/>
        <dbReference type="ChEBI" id="CHEBI:15378"/>
        <dbReference type="ChEBI" id="CHEBI:16510"/>
        <dbReference type="ChEBI" id="CHEBI:33190"/>
        <dbReference type="ChEBI" id="CHEBI:57783"/>
        <dbReference type="ChEBI" id="CHEBI:58349"/>
        <dbReference type="EC" id="1.1.1.298"/>
    </reaction>
</comment>
<comment type="catalytic activity">
    <reaction evidence="2">
        <text>L-allo-threonine + NADP(+) = aminoacetone + CO2 + NADPH</text>
        <dbReference type="Rhea" id="RHEA:43524"/>
        <dbReference type="ChEBI" id="CHEBI:16526"/>
        <dbReference type="ChEBI" id="CHEBI:57783"/>
        <dbReference type="ChEBI" id="CHEBI:58320"/>
        <dbReference type="ChEBI" id="CHEBI:58349"/>
        <dbReference type="ChEBI" id="CHEBI:58585"/>
        <dbReference type="EC" id="1.1.1.381"/>
    </reaction>
</comment>
<comment type="subunit">
    <text evidence="2">Homotetramer.</text>
</comment>
<comment type="similarity">
    <text evidence="5">Belongs to the short-chain dehydrogenases/reductases (SDR) family.</text>
</comment>
<gene>
    <name evidence="2" type="primary">ydfG</name>
    <name type="ordered locus">SF1556</name>
    <name type="ordered locus">S1681</name>
</gene>
<name>YDFG_SHIFL</name>
<proteinExistence type="inferred from homology"/>
<sequence length="248" mass="27236">MIVLVTGATAGFGECITRRFIQQGHKVIATGRRQERLQELTDELGDNLYIAQLDVRNRAAIEEMLASLPAEWSNIDILVNNAGLALGMEPAHKASVEDWETMIDTNNKGLVYMTRAVLPGMVERNHGHIINIGSTAGSWPYAGGNVYGATKAFVRQFSLNLRTDLHGTTVRVTDIEPGLVGGTEFSNVRFKGDDGKAEKTYQNTVALTPEDVSEAVWWVSTLPAHVNINTLEMMPVTQSYAGLNVHRQ</sequence>
<accession>Q83RE8</accession>
<accession>Q7UCH2</accession>